<gene>
    <name type="primary">WEE2</name>
    <name type="synonym">WEE1B</name>
</gene>
<keyword id="KW-0067">ATP-binding</keyword>
<keyword id="KW-0175">Coiled coil</keyword>
<keyword id="KW-0418">Kinase</keyword>
<keyword id="KW-0460">Magnesium</keyword>
<keyword id="KW-0469">Meiosis</keyword>
<keyword id="KW-0479">Metal-binding</keyword>
<keyword id="KW-0547">Nucleotide-binding</keyword>
<keyword id="KW-0539">Nucleus</keyword>
<keyword id="KW-0597">Phosphoprotein</keyword>
<keyword id="KW-1185">Reference proteome</keyword>
<keyword id="KW-0808">Transferase</keyword>
<keyword id="KW-0829">Tyrosine-protein kinase</keyword>
<sequence>MDDSSINKELKQKLNVSYCEEESESEGQKEAPESRETQSQTPDWAEGQESEAKFTPPRTPSSSIHGVGTFEEKDKMSPDQALRTPGPGFHKCPGTPAQPDSRSEVVHCESPYTPKSLLSQSVISSTEKLPSRGSKHLRFTPVPFVDEMTSSALVNINPFTPESYRKQFLRSNGKRKTRGDLEEADPGEGKVEQGLPAKRCVLRETNMASRYEKEFLEVEKIGVGEFGTVYKCIKRLDGCVYAIKRSMKPVAGLSNENLALHEVYAHAVLGHHPHVVRYYSAWAEDDHMIIQNEYCNGGSLQTAISENTKSGNHFPELKLKDILLQISLGLKYIHNSGMVHLDIKPSNIFICHKMQCDSPVVPEEIENEADWFLSANVMYKIAGDLGHVTSISKPKVEEGDSRFLANEILQEDYQHLPKADIFALGLTIAVAAGAESLPANGAKWHHIREGNLPDIPQKLSEEFHNLLKNMIHPDPSERPSAAGLARSRVLRPSLRKAEELQQQLNLEKSKTATLERELREAQQAWSPQEEHSDPGVSGTPTGSRCTKRPVGGKSAKSSSFTCGKSSP</sequence>
<dbReference type="EC" id="2.7.10.2"/>
<dbReference type="SMR" id="E2RSS3"/>
<dbReference type="FunCoup" id="E2RSS3">
    <property type="interactions" value="427"/>
</dbReference>
<dbReference type="STRING" id="9615.ENSCAFP00000005790"/>
<dbReference type="PaxDb" id="9612-ENSCAFP00000005790"/>
<dbReference type="eggNOG" id="KOG0601">
    <property type="taxonomic scope" value="Eukaryota"/>
</dbReference>
<dbReference type="InParanoid" id="E2RSS3"/>
<dbReference type="OrthoDB" id="5337378at2759"/>
<dbReference type="Proteomes" id="UP000002254">
    <property type="component" value="Unplaced"/>
</dbReference>
<dbReference type="Proteomes" id="UP000694429">
    <property type="component" value="Unplaced"/>
</dbReference>
<dbReference type="Proteomes" id="UP000694542">
    <property type="component" value="Unplaced"/>
</dbReference>
<dbReference type="Proteomes" id="UP000805418">
    <property type="component" value="Unplaced"/>
</dbReference>
<dbReference type="GO" id="GO:0005737">
    <property type="term" value="C:cytoplasm"/>
    <property type="evidence" value="ECO:0000250"/>
    <property type="project" value="UniProtKB"/>
</dbReference>
<dbReference type="GO" id="GO:0005634">
    <property type="term" value="C:nucleus"/>
    <property type="evidence" value="ECO:0000250"/>
    <property type="project" value="UniProtKB"/>
</dbReference>
<dbReference type="GO" id="GO:0005524">
    <property type="term" value="F:ATP binding"/>
    <property type="evidence" value="ECO:0007669"/>
    <property type="project" value="UniProtKB-KW"/>
</dbReference>
<dbReference type="GO" id="GO:0000287">
    <property type="term" value="F:magnesium ion binding"/>
    <property type="evidence" value="ECO:0007669"/>
    <property type="project" value="InterPro"/>
</dbReference>
<dbReference type="GO" id="GO:0004715">
    <property type="term" value="F:non-membrane spanning protein tyrosine kinase activity"/>
    <property type="evidence" value="ECO:0007669"/>
    <property type="project" value="UniProtKB-EC"/>
</dbReference>
<dbReference type="GO" id="GO:0004713">
    <property type="term" value="F:protein tyrosine kinase activity"/>
    <property type="evidence" value="ECO:0000318"/>
    <property type="project" value="GO_Central"/>
</dbReference>
<dbReference type="GO" id="GO:0007143">
    <property type="term" value="P:female meiotic nuclear division"/>
    <property type="evidence" value="ECO:0000250"/>
    <property type="project" value="UniProtKB"/>
</dbReference>
<dbReference type="GO" id="GO:0035038">
    <property type="term" value="P:female pronucleus assembly"/>
    <property type="evidence" value="ECO:0000250"/>
    <property type="project" value="UniProtKB"/>
</dbReference>
<dbReference type="GO" id="GO:0000278">
    <property type="term" value="P:mitotic cell cycle"/>
    <property type="evidence" value="ECO:0007669"/>
    <property type="project" value="InterPro"/>
</dbReference>
<dbReference type="GO" id="GO:1900194">
    <property type="term" value="P:negative regulation of oocyte maturation"/>
    <property type="evidence" value="ECO:0000250"/>
    <property type="project" value="UniProtKB"/>
</dbReference>
<dbReference type="GO" id="GO:0042327">
    <property type="term" value="P:positive regulation of phosphorylation"/>
    <property type="evidence" value="ECO:0000250"/>
    <property type="project" value="UniProtKB"/>
</dbReference>
<dbReference type="GO" id="GO:0080154">
    <property type="term" value="P:regulation of fertilization"/>
    <property type="evidence" value="ECO:0000250"/>
    <property type="project" value="UniProtKB"/>
</dbReference>
<dbReference type="GO" id="GO:0060631">
    <property type="term" value="P:regulation of meiosis I"/>
    <property type="evidence" value="ECO:0000250"/>
    <property type="project" value="UniProtKB"/>
</dbReference>
<dbReference type="FunFam" id="3.30.200.20:FF:000115">
    <property type="entry name" value="Wee1-like kinase 2"/>
    <property type="match status" value="1"/>
</dbReference>
<dbReference type="FunFam" id="1.10.510.10:FF:000217">
    <property type="entry name" value="Wee1-like protein kinase"/>
    <property type="match status" value="1"/>
</dbReference>
<dbReference type="Gene3D" id="3.30.200.20">
    <property type="entry name" value="Phosphorylase Kinase, domain 1"/>
    <property type="match status" value="1"/>
</dbReference>
<dbReference type="Gene3D" id="1.10.510.10">
    <property type="entry name" value="Transferase(Phosphotransferase) domain 1"/>
    <property type="match status" value="1"/>
</dbReference>
<dbReference type="InterPro" id="IPR050339">
    <property type="entry name" value="CC_SR_Kinase"/>
</dbReference>
<dbReference type="InterPro" id="IPR011009">
    <property type="entry name" value="Kinase-like_dom_sf"/>
</dbReference>
<dbReference type="InterPro" id="IPR000719">
    <property type="entry name" value="Prot_kinase_dom"/>
</dbReference>
<dbReference type="InterPro" id="IPR017441">
    <property type="entry name" value="Protein_kinase_ATP_BS"/>
</dbReference>
<dbReference type="InterPro" id="IPR008271">
    <property type="entry name" value="Ser/Thr_kinase_AS"/>
</dbReference>
<dbReference type="InterPro" id="IPR017164">
    <property type="entry name" value="Wee1-like_protein_kinase"/>
</dbReference>
<dbReference type="PANTHER" id="PTHR11042">
    <property type="entry name" value="EUKARYOTIC TRANSLATION INITIATION FACTOR 2-ALPHA KINASE EIF2-ALPHA KINASE -RELATED"/>
    <property type="match status" value="1"/>
</dbReference>
<dbReference type="PANTHER" id="PTHR11042:SF75">
    <property type="entry name" value="WEE1-LIKE PROTEIN KINASE 2"/>
    <property type="match status" value="1"/>
</dbReference>
<dbReference type="Pfam" id="PF00069">
    <property type="entry name" value="Pkinase"/>
    <property type="match status" value="1"/>
</dbReference>
<dbReference type="PIRSF" id="PIRSF037281">
    <property type="entry name" value="Wee1-like_protein_kinase"/>
    <property type="match status" value="1"/>
</dbReference>
<dbReference type="SMART" id="SM00220">
    <property type="entry name" value="S_TKc"/>
    <property type="match status" value="1"/>
</dbReference>
<dbReference type="SUPFAM" id="SSF56112">
    <property type="entry name" value="Protein kinase-like (PK-like)"/>
    <property type="match status" value="1"/>
</dbReference>
<dbReference type="PROSITE" id="PS00107">
    <property type="entry name" value="PROTEIN_KINASE_ATP"/>
    <property type="match status" value="1"/>
</dbReference>
<dbReference type="PROSITE" id="PS50011">
    <property type="entry name" value="PROTEIN_KINASE_DOM"/>
    <property type="match status" value="1"/>
</dbReference>
<dbReference type="PROSITE" id="PS00108">
    <property type="entry name" value="PROTEIN_KINASE_ST"/>
    <property type="match status" value="1"/>
</dbReference>
<accession>E2RSS3</accession>
<proteinExistence type="inferred from homology"/>
<name>WEE2_CANLF</name>
<feature type="chain" id="PRO_0000409525" description="Wee1-like protein kinase 2">
    <location>
        <begin position="1"/>
        <end position="567"/>
    </location>
</feature>
<feature type="domain" description="Protein kinase" evidence="4">
    <location>
        <begin position="215"/>
        <end position="494"/>
    </location>
</feature>
<feature type="region of interest" description="Disordered" evidence="6">
    <location>
        <begin position="1"/>
        <end position="103"/>
    </location>
</feature>
<feature type="region of interest" description="Disordered" evidence="6">
    <location>
        <begin position="170"/>
        <end position="191"/>
    </location>
</feature>
<feature type="region of interest" description="Disordered" evidence="6">
    <location>
        <begin position="502"/>
        <end position="567"/>
    </location>
</feature>
<feature type="coiled-coil region" evidence="3">
    <location>
        <begin position="497"/>
        <end position="523"/>
    </location>
</feature>
<feature type="short sequence motif" description="Nuclear localization signal" evidence="1">
    <location>
        <begin position="174"/>
        <end position="176"/>
    </location>
</feature>
<feature type="short sequence motif" description="Nuclear export signal" evidence="1">
    <location>
        <begin position="318"/>
        <end position="332"/>
    </location>
</feature>
<feature type="compositionally biased region" description="Basic and acidic residues" evidence="6">
    <location>
        <begin position="1"/>
        <end position="12"/>
    </location>
</feature>
<feature type="compositionally biased region" description="Basic and acidic residues" evidence="6">
    <location>
        <begin position="26"/>
        <end position="36"/>
    </location>
</feature>
<feature type="compositionally biased region" description="Basic and acidic residues" evidence="6">
    <location>
        <begin position="507"/>
        <end position="520"/>
    </location>
</feature>
<feature type="compositionally biased region" description="Polar residues" evidence="6">
    <location>
        <begin position="555"/>
        <end position="567"/>
    </location>
</feature>
<feature type="active site" description="Proton acceptor" evidence="4 5">
    <location>
        <position position="342"/>
    </location>
</feature>
<feature type="binding site" evidence="4">
    <location>
        <begin position="221"/>
        <end position="229"/>
    </location>
    <ligand>
        <name>ATP</name>
        <dbReference type="ChEBI" id="CHEBI:30616"/>
    </ligand>
</feature>
<feature type="binding site" evidence="4">
    <location>
        <position position="244"/>
    </location>
    <ligand>
        <name>ATP</name>
        <dbReference type="ChEBI" id="CHEBI:30616"/>
    </ligand>
</feature>
<feature type="binding site" evidence="1">
    <location>
        <position position="347"/>
    </location>
    <ligand>
        <name>Mg(2+)</name>
        <dbReference type="ChEBI" id="CHEBI:18420"/>
    </ligand>
</feature>
<feature type="binding site" evidence="1">
    <location>
        <position position="384"/>
    </location>
    <ligand>
        <name>Mg(2+)</name>
        <dbReference type="ChEBI" id="CHEBI:18420"/>
    </ligand>
</feature>
<feature type="modified residue" description="Phosphoserine" evidence="2">
    <location>
        <position position="77"/>
    </location>
</feature>
<protein>
    <recommendedName>
        <fullName>Wee1-like protein kinase 2</fullName>
        <ecNumber>2.7.10.2</ecNumber>
    </recommendedName>
    <alternativeName>
        <fullName>Wee1-like protein kinase 1B</fullName>
    </alternativeName>
    <alternativeName>
        <fullName>Wee1B kinase</fullName>
    </alternativeName>
</protein>
<reference key="1">
    <citation type="journal article" date="2005" name="Nature">
        <title>Genome sequence, comparative analysis and haplotype structure of the domestic dog.</title>
        <authorList>
            <person name="Lindblad-Toh K."/>
            <person name="Wade C.M."/>
            <person name="Mikkelsen T.S."/>
            <person name="Karlsson E.K."/>
            <person name="Jaffe D.B."/>
            <person name="Kamal M."/>
            <person name="Clamp M."/>
            <person name="Chang J.L."/>
            <person name="Kulbokas E.J. III"/>
            <person name="Zody M.C."/>
            <person name="Mauceli E."/>
            <person name="Xie X."/>
            <person name="Breen M."/>
            <person name="Wayne R.K."/>
            <person name="Ostrander E.A."/>
            <person name="Ponting C.P."/>
            <person name="Galibert F."/>
            <person name="Smith D.R."/>
            <person name="deJong P.J."/>
            <person name="Kirkness E.F."/>
            <person name="Alvarez P."/>
            <person name="Biagi T."/>
            <person name="Brockman W."/>
            <person name="Butler J."/>
            <person name="Chin C.-W."/>
            <person name="Cook A."/>
            <person name="Cuff J."/>
            <person name="Daly M.J."/>
            <person name="DeCaprio D."/>
            <person name="Gnerre S."/>
            <person name="Grabherr M."/>
            <person name="Kellis M."/>
            <person name="Kleber M."/>
            <person name="Bardeleben C."/>
            <person name="Goodstadt L."/>
            <person name="Heger A."/>
            <person name="Hitte C."/>
            <person name="Kim L."/>
            <person name="Koepfli K.-P."/>
            <person name="Parker H.G."/>
            <person name="Pollinger J.P."/>
            <person name="Searle S.M.J."/>
            <person name="Sutter N.B."/>
            <person name="Thomas R."/>
            <person name="Webber C."/>
            <person name="Baldwin J."/>
            <person name="Abebe A."/>
            <person name="Abouelleil A."/>
            <person name="Aftuck L."/>
            <person name="Ait-Zahra M."/>
            <person name="Aldredge T."/>
            <person name="Allen N."/>
            <person name="An P."/>
            <person name="Anderson S."/>
            <person name="Antoine C."/>
            <person name="Arachchi H."/>
            <person name="Aslam A."/>
            <person name="Ayotte L."/>
            <person name="Bachantsang P."/>
            <person name="Barry A."/>
            <person name="Bayul T."/>
            <person name="Benamara M."/>
            <person name="Berlin A."/>
            <person name="Bessette D."/>
            <person name="Blitshteyn B."/>
            <person name="Bloom T."/>
            <person name="Blye J."/>
            <person name="Boguslavskiy L."/>
            <person name="Bonnet C."/>
            <person name="Boukhgalter B."/>
            <person name="Brown A."/>
            <person name="Cahill P."/>
            <person name="Calixte N."/>
            <person name="Camarata J."/>
            <person name="Cheshatsang Y."/>
            <person name="Chu J."/>
            <person name="Citroen M."/>
            <person name="Collymore A."/>
            <person name="Cooke P."/>
            <person name="Dawoe T."/>
            <person name="Daza R."/>
            <person name="Decktor K."/>
            <person name="DeGray S."/>
            <person name="Dhargay N."/>
            <person name="Dooley K."/>
            <person name="Dooley K."/>
            <person name="Dorje P."/>
            <person name="Dorjee K."/>
            <person name="Dorris L."/>
            <person name="Duffey N."/>
            <person name="Dupes A."/>
            <person name="Egbiremolen O."/>
            <person name="Elong R."/>
            <person name="Falk J."/>
            <person name="Farina A."/>
            <person name="Faro S."/>
            <person name="Ferguson D."/>
            <person name="Ferreira P."/>
            <person name="Fisher S."/>
            <person name="FitzGerald M."/>
            <person name="Foley K."/>
            <person name="Foley C."/>
            <person name="Franke A."/>
            <person name="Friedrich D."/>
            <person name="Gage D."/>
            <person name="Garber M."/>
            <person name="Gearin G."/>
            <person name="Giannoukos G."/>
            <person name="Goode T."/>
            <person name="Goyette A."/>
            <person name="Graham J."/>
            <person name="Grandbois E."/>
            <person name="Gyaltsen K."/>
            <person name="Hafez N."/>
            <person name="Hagopian D."/>
            <person name="Hagos B."/>
            <person name="Hall J."/>
            <person name="Healy C."/>
            <person name="Hegarty R."/>
            <person name="Honan T."/>
            <person name="Horn A."/>
            <person name="Houde N."/>
            <person name="Hughes L."/>
            <person name="Hunnicutt L."/>
            <person name="Husby M."/>
            <person name="Jester B."/>
            <person name="Jones C."/>
            <person name="Kamat A."/>
            <person name="Kanga B."/>
            <person name="Kells C."/>
            <person name="Khazanovich D."/>
            <person name="Kieu A.C."/>
            <person name="Kisner P."/>
            <person name="Kumar M."/>
            <person name="Lance K."/>
            <person name="Landers T."/>
            <person name="Lara M."/>
            <person name="Lee W."/>
            <person name="Leger J.-P."/>
            <person name="Lennon N."/>
            <person name="Leuper L."/>
            <person name="LeVine S."/>
            <person name="Liu J."/>
            <person name="Liu X."/>
            <person name="Lokyitsang Y."/>
            <person name="Lokyitsang T."/>
            <person name="Lui A."/>
            <person name="Macdonald J."/>
            <person name="Major J."/>
            <person name="Marabella R."/>
            <person name="Maru K."/>
            <person name="Matthews C."/>
            <person name="McDonough S."/>
            <person name="Mehta T."/>
            <person name="Meldrim J."/>
            <person name="Melnikov A."/>
            <person name="Meneus L."/>
            <person name="Mihalev A."/>
            <person name="Mihova T."/>
            <person name="Miller K."/>
            <person name="Mittelman R."/>
            <person name="Mlenga V."/>
            <person name="Mulrain L."/>
            <person name="Munson G."/>
            <person name="Navidi A."/>
            <person name="Naylor J."/>
            <person name="Nguyen T."/>
            <person name="Nguyen N."/>
            <person name="Nguyen C."/>
            <person name="Nguyen T."/>
            <person name="Nicol R."/>
            <person name="Norbu N."/>
            <person name="Norbu C."/>
            <person name="Novod N."/>
            <person name="Nyima T."/>
            <person name="Olandt P."/>
            <person name="O'Neill B."/>
            <person name="O'Neill K."/>
            <person name="Osman S."/>
            <person name="Oyono L."/>
            <person name="Patti C."/>
            <person name="Perrin D."/>
            <person name="Phunkhang P."/>
            <person name="Pierre F."/>
            <person name="Priest M."/>
            <person name="Rachupka A."/>
            <person name="Raghuraman S."/>
            <person name="Rameau R."/>
            <person name="Ray V."/>
            <person name="Raymond C."/>
            <person name="Rege F."/>
            <person name="Rise C."/>
            <person name="Rogers J."/>
            <person name="Rogov P."/>
            <person name="Sahalie J."/>
            <person name="Settipalli S."/>
            <person name="Sharpe T."/>
            <person name="Shea T."/>
            <person name="Sheehan M."/>
            <person name="Sherpa N."/>
            <person name="Shi J."/>
            <person name="Shih D."/>
            <person name="Sloan J."/>
            <person name="Smith C."/>
            <person name="Sparrow T."/>
            <person name="Stalker J."/>
            <person name="Stange-Thomann N."/>
            <person name="Stavropoulos S."/>
            <person name="Stone C."/>
            <person name="Stone S."/>
            <person name="Sykes S."/>
            <person name="Tchuinga P."/>
            <person name="Tenzing P."/>
            <person name="Tesfaye S."/>
            <person name="Thoulutsang D."/>
            <person name="Thoulutsang Y."/>
            <person name="Topham K."/>
            <person name="Topping I."/>
            <person name="Tsamla T."/>
            <person name="Vassiliev H."/>
            <person name="Venkataraman V."/>
            <person name="Vo A."/>
            <person name="Wangchuk T."/>
            <person name="Wangdi T."/>
            <person name="Weiand M."/>
            <person name="Wilkinson J."/>
            <person name="Wilson A."/>
            <person name="Yadav S."/>
            <person name="Yang S."/>
            <person name="Yang X."/>
            <person name="Young G."/>
            <person name="Yu Q."/>
            <person name="Zainoun J."/>
            <person name="Zembek L."/>
            <person name="Zimmer A."/>
            <person name="Lander E.S."/>
        </authorList>
    </citation>
    <scope>NUCLEOTIDE SEQUENCE [LARGE SCALE GENOMIC DNA]</scope>
    <source>
        <strain>Boxer</strain>
    </source>
</reference>
<evidence type="ECO:0000250" key="1"/>
<evidence type="ECO:0000250" key="2">
    <source>
        <dbReference type="UniProtKB" id="A4PES0"/>
    </source>
</evidence>
<evidence type="ECO:0000255" key="3"/>
<evidence type="ECO:0000255" key="4">
    <source>
        <dbReference type="PROSITE-ProRule" id="PRU00159"/>
    </source>
</evidence>
<evidence type="ECO:0000255" key="5">
    <source>
        <dbReference type="PROSITE-ProRule" id="PRU10027"/>
    </source>
</evidence>
<evidence type="ECO:0000256" key="6">
    <source>
        <dbReference type="SAM" id="MobiDB-lite"/>
    </source>
</evidence>
<organism>
    <name type="scientific">Canis lupus familiaris</name>
    <name type="common">Dog</name>
    <name type="synonym">Canis familiaris</name>
    <dbReference type="NCBI Taxonomy" id="9615"/>
    <lineage>
        <taxon>Eukaryota</taxon>
        <taxon>Metazoa</taxon>
        <taxon>Chordata</taxon>
        <taxon>Craniata</taxon>
        <taxon>Vertebrata</taxon>
        <taxon>Euteleostomi</taxon>
        <taxon>Mammalia</taxon>
        <taxon>Eutheria</taxon>
        <taxon>Laurasiatheria</taxon>
        <taxon>Carnivora</taxon>
        <taxon>Caniformia</taxon>
        <taxon>Canidae</taxon>
        <taxon>Canis</taxon>
    </lineage>
</organism>
<comment type="function">
    <text evidence="1">Oocyte-specific protein tyrosine kinase that phosphorylates and inhibits CDK1 and acts as a key regulator of meiosis during both prophase I and metaphase II. Required to maintain meiotic arrest in oocytes during the germinal vesicle (GV) stage, a long period of quiescence at dictyate prophase I, by phosphorylating CDK1 at 'Tyr-15', leading to inhibit CDK1 activity and prevent meiotic reentry. Also required for metaphase II exit during egg activation by phosphorylating CDK1 at 'Tyr-15', to ensure exit from meiosis in oocytes and promote pronuclear formation (By similarity).</text>
</comment>
<comment type="catalytic activity">
    <reaction evidence="5">
        <text>L-tyrosyl-[protein] + ATP = O-phospho-L-tyrosyl-[protein] + ADP + H(+)</text>
        <dbReference type="Rhea" id="RHEA:10596"/>
        <dbReference type="Rhea" id="RHEA-COMP:10136"/>
        <dbReference type="Rhea" id="RHEA-COMP:20101"/>
        <dbReference type="ChEBI" id="CHEBI:15378"/>
        <dbReference type="ChEBI" id="CHEBI:30616"/>
        <dbReference type="ChEBI" id="CHEBI:46858"/>
        <dbReference type="ChEBI" id="CHEBI:61978"/>
        <dbReference type="ChEBI" id="CHEBI:456216"/>
        <dbReference type="EC" id="2.7.10.2"/>
    </reaction>
</comment>
<comment type="subcellular location">
    <subcellularLocation>
        <location evidence="1">Nucleus</location>
    </subcellularLocation>
</comment>
<comment type="PTM">
    <text evidence="1">Phosphorylation leads to increase its activity.</text>
</comment>
<comment type="similarity">
    <text evidence="4">Belongs to the protein kinase superfamily. Ser/Thr protein kinase family. WEE1 subfamily.</text>
</comment>